<evidence type="ECO:0000255" key="1"/>
<evidence type="ECO:0000255" key="2">
    <source>
        <dbReference type="PROSITE-ProRule" id="PRU00720"/>
    </source>
</evidence>
<evidence type="ECO:0000255" key="3">
    <source>
        <dbReference type="PROSITE-ProRule" id="PRU01055"/>
    </source>
</evidence>
<evidence type="ECO:0000256" key="4">
    <source>
        <dbReference type="SAM" id="MobiDB-lite"/>
    </source>
</evidence>
<evidence type="ECO:0000269" key="5">
    <source>
    </source>
</evidence>
<evidence type="ECO:0000269" key="6">
    <source>
    </source>
</evidence>
<evidence type="ECO:0000269" key="7">
    <source>
    </source>
</evidence>
<evidence type="ECO:0000269" key="8">
    <source>
    </source>
</evidence>
<evidence type="ECO:0000269" key="9">
    <source>
    </source>
</evidence>
<evidence type="ECO:0000269" key="10">
    <source>
    </source>
</evidence>
<evidence type="ECO:0000269" key="11">
    <source>
    </source>
</evidence>
<evidence type="ECO:0000305" key="12"/>
<evidence type="ECO:0007744" key="13">
    <source>
    </source>
</evidence>
<evidence type="ECO:0007744" key="14">
    <source>
    </source>
</evidence>
<comment type="function">
    <text evidence="5 11">Microtubule-associated force-producing protein that participates mitochondrial fission. Fission of mitochondria occurs in many cell types and constitutes an important step in mitochondria morphology, which is balanced between fusion and fission. Functions antagonistically with FZO1.</text>
</comment>
<comment type="catalytic activity">
    <reaction>
        <text>GTP + H2O = GDP + phosphate + H(+)</text>
        <dbReference type="Rhea" id="RHEA:19669"/>
        <dbReference type="ChEBI" id="CHEBI:15377"/>
        <dbReference type="ChEBI" id="CHEBI:15378"/>
        <dbReference type="ChEBI" id="CHEBI:37565"/>
        <dbReference type="ChEBI" id="CHEBI:43474"/>
        <dbReference type="ChEBI" id="CHEBI:58189"/>
        <dbReference type="EC" id="3.6.5.5"/>
    </reaction>
</comment>
<comment type="subunit">
    <text evidence="6 8">Interacts with FIS1 and MDV1.</text>
</comment>
<comment type="interaction">
    <interactant intactId="EBI-6002">
        <id>P54861</id>
    </interactant>
    <interactant intactId="EBI-6002">
        <id>P54861</id>
        <label>DNM1</label>
    </interactant>
    <organismsDiffer>false</organismsDiffer>
    <experiments>4</experiments>
</comment>
<comment type="subcellular location">
    <subcellularLocation>
        <location evidence="5 6 9 11">Mitochondrion outer membrane</location>
        <topology evidence="5 6 9 11">Peripheral membrane protein</topology>
        <orientation evidence="5 6 9 11">Cytoplasmic side</orientation>
    </subcellularLocation>
    <text>Cytoplasm, localizes to the cytoplasmic outer membrane of mitochondria.</text>
</comment>
<comment type="domain">
    <text>The GTPase domain modulates a rate-limiting step in mitochondrial membrane fission.</text>
</comment>
<comment type="miscellaneous">
    <text evidence="10">Present with 9600 molecules/cell in log phase SD medium.</text>
</comment>
<comment type="similarity">
    <text evidence="3">Belongs to the TRAFAC class dynamin-like GTPase superfamily. Dynamin/Fzo/YdjA family.</text>
</comment>
<proteinExistence type="evidence at protein level"/>
<gene>
    <name type="primary">DNM1</name>
    <name type="ordered locus">YLL001W</name>
    <name type="ORF">L1381</name>
</gene>
<sequence>MASLEDLIPTVNKLQDVMYDSGIDTLDLPILAVVGSQSSGKSSILETLVGRDFLPRGTGIVTRRPLVLQLNNISPNSPLIEEDDNSVNPHDEVTKISGFEAGTKPLEYRGKERNHADEWGEFLHIPGKRFYDFDDIKREIENETARIAGKDKGISKIPINLKVFSPHVLNLTLVDLPGITKVPIGEQPPDIEKQIKNLILDYIATPNCLILAVSPANVDLVNSESLKLAREVDPQGKRTIGVITKLDLMDSGTNALDILSGKMYPLKLGFVGVVNRSQQDIQLNKTVEESLDKEEDYFRKHPVYRTISTKCGTRYLAKLLNQTLLSHIRDKLPDIKTKLNTLISQTEQELARYGGVGATTNESRASLVLQLMNKFSTNFISSIDGTSSDINTKELCGGARIYYIYNNVFGNSLKSIDPTSNLSVLDVRTAIRNSTGPRPTLFVPELAFDLLVKPQIKLLLEPSQRCVELVYEELMKICHKCGSAELARYPKLKSMLIEVISELLRERLQPTRSYVESLIDIHRAYINTNHPNFLSATEAMDDIMKTRRKRNQELLKSKLSQQENGQTNGINGTSSISSNIDQDSAKNSDYDDDGIDAESKQTKDKFLNYFFGKDKKGQPVFDASDKKRSIAGDGNIEDFRNLQISDFSLGDIDDLENAEPPLTEREELECELIKRLIVSYFDIIREMIEDQVPKAVMCLLVNYCKDSVQNRLVTKLYKETLFEELLVEDQTLAQDRELCVKSLGVYKKAATLISNIL</sequence>
<accession>P54861</accession>
<accession>D6VY02</accession>
<protein>
    <recommendedName>
        <fullName>Dynamin-related protein DNM1</fullName>
        <ecNumber>3.6.5.5</ecNumber>
    </recommendedName>
</protein>
<reference key="1">
    <citation type="journal article" date="1995" name="J. Cell Biol.">
        <title>DNM1, a dynamin-related gene, participates in endosomal trafficking in yeast.</title>
        <authorList>
            <person name="Gammie A.E."/>
            <person name="Kurihara L.J."/>
            <person name="Vallee R.B."/>
            <person name="Rose M.D."/>
        </authorList>
    </citation>
    <scope>NUCLEOTIDE SEQUENCE [GENOMIC DNA]</scope>
    <source>
        <strain>ATCC 204508 / S288c</strain>
    </source>
</reference>
<reference key="2">
    <citation type="journal article" date="1996" name="Yeast">
        <title>Sequence analysis of the CEN12 region of Saccharomyces cerevisiae on a 43.7 kb fragment of chromosome XII including an open reading frame homologous to the human cystic fibrosis transmembrane conductance regulator protein CFTR.</title>
        <authorList>
            <person name="Miosga T."/>
            <person name="Zimmermann F.K."/>
        </authorList>
    </citation>
    <scope>NUCLEOTIDE SEQUENCE [GENOMIC DNA]</scope>
    <source>
        <strain>ATCC 90840 / EAY235 / FY23</strain>
    </source>
</reference>
<reference key="3">
    <citation type="journal article" date="1997" name="Nature">
        <title>The nucleotide sequence of Saccharomyces cerevisiae chromosome XII.</title>
        <authorList>
            <person name="Johnston M."/>
            <person name="Hillier L.W."/>
            <person name="Riles L."/>
            <person name="Albermann K."/>
            <person name="Andre B."/>
            <person name="Ansorge W."/>
            <person name="Benes V."/>
            <person name="Brueckner M."/>
            <person name="Delius H."/>
            <person name="Dubois E."/>
            <person name="Duesterhoeft A."/>
            <person name="Entian K.-D."/>
            <person name="Floeth M."/>
            <person name="Goffeau A."/>
            <person name="Hebling U."/>
            <person name="Heumann K."/>
            <person name="Heuss-Neitzel D."/>
            <person name="Hilbert H."/>
            <person name="Hilger F."/>
            <person name="Kleine K."/>
            <person name="Koetter P."/>
            <person name="Louis E.J."/>
            <person name="Messenguy F."/>
            <person name="Mewes H.-W."/>
            <person name="Miosga T."/>
            <person name="Moestl D."/>
            <person name="Mueller-Auer S."/>
            <person name="Nentwich U."/>
            <person name="Obermaier B."/>
            <person name="Piravandi E."/>
            <person name="Pohl T.M."/>
            <person name="Portetelle D."/>
            <person name="Purnelle B."/>
            <person name="Rechmann S."/>
            <person name="Rieger M."/>
            <person name="Rinke M."/>
            <person name="Rose M."/>
            <person name="Scharfe M."/>
            <person name="Scherens B."/>
            <person name="Scholler P."/>
            <person name="Schwager C."/>
            <person name="Schwarz S."/>
            <person name="Underwood A.P."/>
            <person name="Urrestarazu L.A."/>
            <person name="Vandenbol M."/>
            <person name="Verhasselt P."/>
            <person name="Vierendeels F."/>
            <person name="Voet M."/>
            <person name="Volckaert G."/>
            <person name="Voss H."/>
            <person name="Wambutt R."/>
            <person name="Wedler E."/>
            <person name="Wedler H."/>
            <person name="Zimmermann F.K."/>
            <person name="Zollner A."/>
            <person name="Hani J."/>
            <person name="Hoheisel J.D."/>
        </authorList>
    </citation>
    <scope>NUCLEOTIDE SEQUENCE [LARGE SCALE GENOMIC DNA]</scope>
    <source>
        <strain>ATCC 204508 / S288c</strain>
    </source>
</reference>
<reference key="4">
    <citation type="journal article" date="2014" name="G3 (Bethesda)">
        <title>The reference genome sequence of Saccharomyces cerevisiae: Then and now.</title>
        <authorList>
            <person name="Engel S.R."/>
            <person name="Dietrich F.S."/>
            <person name="Fisk D.G."/>
            <person name="Binkley G."/>
            <person name="Balakrishnan R."/>
            <person name="Costanzo M.C."/>
            <person name="Dwight S.S."/>
            <person name="Hitz B.C."/>
            <person name="Karra K."/>
            <person name="Nash R.S."/>
            <person name="Weng S."/>
            <person name="Wong E.D."/>
            <person name="Lloyd P."/>
            <person name="Skrzypek M.S."/>
            <person name="Miyasato S.R."/>
            <person name="Simison M."/>
            <person name="Cherry J.M."/>
        </authorList>
    </citation>
    <scope>GENOME REANNOTATION</scope>
    <source>
        <strain>ATCC 204508 / S288c</strain>
    </source>
</reference>
<reference key="5">
    <citation type="journal article" date="1999" name="Nat. Cell Biol.">
        <title>The dynamin-related GTPase Dnm1 regulates mitochondrial fission in yeast.</title>
        <authorList>
            <person name="Bleazard W."/>
            <person name="McCaffery J.M."/>
            <person name="King E.J."/>
            <person name="Bale S."/>
            <person name="Mozdy A."/>
            <person name="Tieu Q."/>
            <person name="Nunnari J."/>
            <person name="Shaw J.M."/>
        </authorList>
    </citation>
    <scope>FUNCTION</scope>
    <scope>SUBCELLULAR LOCATION</scope>
</reference>
<reference key="6">
    <citation type="journal article" date="2000" name="J. Cell Biol.">
        <title>Mdv1p is a WD repeat protein that interacts with the dynamin-related GTPase, Dnm1p, to trigger mitochondrial division.</title>
        <authorList>
            <person name="Tieu Q."/>
            <person name="Nunnari J."/>
        </authorList>
    </citation>
    <scope>INTERACTION WITH MDV1</scope>
    <scope>SUBCELLULAR LOCATION</scope>
</reference>
<reference key="7">
    <citation type="journal article" date="2001" name="Mol. Biol. Cell">
        <title>The GTPase effector domain sequence of the Dnm1p GTPase regulates self-assembly and controls a rate-limiting step in mitochondrial fission.</title>
        <authorList>
            <person name="Fukushima N.H."/>
            <person name="Brisch E."/>
            <person name="Keegan B.R."/>
            <person name="Bleazard W."/>
            <person name="Shaw J.M."/>
        </authorList>
    </citation>
    <scope>MUTAGENESIS OF LYS-705</scope>
</reference>
<reference key="8">
    <citation type="journal article" date="2003" name="Mol. Biol. Cell">
        <title>The WD-repeats of Net2p interact with Dnm1p and Fis1p to regulate division of mitochondria.</title>
        <authorList>
            <person name="Cerveny K.L."/>
            <person name="Jensen R.E."/>
        </authorList>
    </citation>
    <scope>INTERACTION WITH FIS1 AND MDV1</scope>
</reference>
<reference key="9">
    <citation type="journal article" date="2003" name="Nature">
        <title>Global analysis of protein localization in budding yeast.</title>
        <authorList>
            <person name="Huh W.-K."/>
            <person name="Falvo J.V."/>
            <person name="Gerke L.C."/>
            <person name="Carroll A.S."/>
            <person name="Howson R.W."/>
            <person name="Weissman J.S."/>
            <person name="O'Shea E.K."/>
        </authorList>
    </citation>
    <scope>SUBCELLULAR LOCATION [LARGE SCALE ANALYSIS]</scope>
</reference>
<reference key="10">
    <citation type="journal article" date="2003" name="Nature">
        <title>Global analysis of protein expression in yeast.</title>
        <authorList>
            <person name="Ghaemmaghami S."/>
            <person name="Huh W.-K."/>
            <person name="Bower K."/>
            <person name="Howson R.W."/>
            <person name="Belle A."/>
            <person name="Dephoure N."/>
            <person name="O'Shea E.K."/>
            <person name="Weissman J.S."/>
        </authorList>
    </citation>
    <scope>LEVEL OF PROTEIN EXPRESSION [LARGE SCALE ANALYSIS]</scope>
</reference>
<reference key="11">
    <citation type="journal article" date="2008" name="Mol. Cell. Proteomics">
        <title>A multidimensional chromatography technology for in-depth phosphoproteome analysis.</title>
        <authorList>
            <person name="Albuquerque C.P."/>
            <person name="Smolka M.B."/>
            <person name="Payne S.H."/>
            <person name="Bafna V."/>
            <person name="Eng J."/>
            <person name="Zhou H."/>
        </authorList>
    </citation>
    <scope>PHOSPHORYLATION [LARGE SCALE ANALYSIS] AT SER-629</scope>
    <scope>IDENTIFICATION BY MASS SPECTROMETRY [LARGE SCALE ANALYSIS]</scope>
</reference>
<reference key="12">
    <citation type="journal article" date="2009" name="Science">
        <title>Global analysis of Cdk1 substrate phosphorylation sites provides insights into evolution.</title>
        <authorList>
            <person name="Holt L.J."/>
            <person name="Tuch B.B."/>
            <person name="Villen J."/>
            <person name="Johnson A.D."/>
            <person name="Gygi S.P."/>
            <person name="Morgan D.O."/>
        </authorList>
    </citation>
    <scope>PHOSPHORYLATION [LARGE SCALE ANALYSIS] AT SER-629</scope>
    <scope>IDENTIFICATION BY MASS SPECTROMETRY [LARGE SCALE ANALYSIS]</scope>
</reference>
<reference key="13">
    <citation type="journal article" date="2013" name="Proc. Natl. Acad. Sci. U.S.A.">
        <title>Interchangeable adaptors regulate mitochondrial dynamin assembly for membrane scission.</title>
        <authorList>
            <person name="Koirala S."/>
            <person name="Guo Q."/>
            <person name="Kalia R."/>
            <person name="Bui H.T."/>
            <person name="Eckert D.M."/>
            <person name="Frost A."/>
            <person name="Shaw J.M."/>
        </authorList>
    </citation>
    <scope>FUNCTION</scope>
    <scope>SUBCELLULAR LOCATION</scope>
</reference>
<dbReference type="EC" id="3.6.5.5"/>
<dbReference type="EMBL" id="L40588">
    <property type="protein sequence ID" value="AAA99998.1"/>
    <property type="molecule type" value="Genomic_DNA"/>
</dbReference>
<dbReference type="EMBL" id="X91488">
    <property type="protein sequence ID" value="CAA62769.1"/>
    <property type="molecule type" value="Genomic_DNA"/>
</dbReference>
<dbReference type="EMBL" id="Z73106">
    <property type="protein sequence ID" value="CAA97444.1"/>
    <property type="molecule type" value="Genomic_DNA"/>
</dbReference>
<dbReference type="EMBL" id="BK006945">
    <property type="protein sequence ID" value="DAA09318.1"/>
    <property type="molecule type" value="Genomic_DNA"/>
</dbReference>
<dbReference type="PIR" id="S64742">
    <property type="entry name" value="S64742"/>
</dbReference>
<dbReference type="RefSeq" id="NP_013100.1">
    <property type="nucleotide sequence ID" value="NM_001181821.1"/>
</dbReference>
<dbReference type="SMR" id="P54861"/>
<dbReference type="BioGRID" id="31273">
    <property type="interactions" value="255"/>
</dbReference>
<dbReference type="DIP" id="DIP-1908N"/>
<dbReference type="FunCoup" id="P54861">
    <property type="interactions" value="1628"/>
</dbReference>
<dbReference type="IntAct" id="P54861">
    <property type="interactions" value="29"/>
</dbReference>
<dbReference type="MINT" id="P54861"/>
<dbReference type="STRING" id="4932.YLL001W"/>
<dbReference type="iPTMnet" id="P54861"/>
<dbReference type="PaxDb" id="4932-YLL001W"/>
<dbReference type="PeptideAtlas" id="P54861"/>
<dbReference type="EnsemblFungi" id="YLL001W_mRNA">
    <property type="protein sequence ID" value="YLL001W"/>
    <property type="gene ID" value="YLL001W"/>
</dbReference>
<dbReference type="GeneID" id="850686"/>
<dbReference type="KEGG" id="sce:YLL001W"/>
<dbReference type="AGR" id="SGD:S000003924"/>
<dbReference type="SGD" id="S000003924">
    <property type="gene designation" value="DNM1"/>
</dbReference>
<dbReference type="VEuPathDB" id="FungiDB:YLL001W"/>
<dbReference type="eggNOG" id="KOG0446">
    <property type="taxonomic scope" value="Eukaryota"/>
</dbReference>
<dbReference type="GeneTree" id="ENSGT00940000172538"/>
<dbReference type="HOGENOM" id="CLU_008964_5_0_1"/>
<dbReference type="InParanoid" id="P54861"/>
<dbReference type="OMA" id="KICHNCG"/>
<dbReference type="OrthoDB" id="5061070at2759"/>
<dbReference type="BioCyc" id="YEAST:G3O-32106-MONOMER"/>
<dbReference type="BRENDA" id="3.6.5.5">
    <property type="organism ID" value="984"/>
</dbReference>
<dbReference type="Reactome" id="R-SCE-75153">
    <property type="pathway name" value="Apoptotic execution phase"/>
</dbReference>
<dbReference type="BioGRID-ORCS" id="850686">
    <property type="hits" value="0 hits in 10 CRISPR screens"/>
</dbReference>
<dbReference type="PRO" id="PR:P54861"/>
<dbReference type="Proteomes" id="UP000002311">
    <property type="component" value="Chromosome XII"/>
</dbReference>
<dbReference type="RNAct" id="P54861">
    <property type="molecule type" value="protein"/>
</dbReference>
<dbReference type="GO" id="GO:0005737">
    <property type="term" value="C:cytoplasm"/>
    <property type="evidence" value="ECO:0000314"/>
    <property type="project" value="UniProtKB"/>
</dbReference>
<dbReference type="GO" id="GO:0005829">
    <property type="term" value="C:cytosol"/>
    <property type="evidence" value="ECO:0000314"/>
    <property type="project" value="SGD"/>
</dbReference>
<dbReference type="GO" id="GO:0016020">
    <property type="term" value="C:membrane"/>
    <property type="evidence" value="ECO:0000318"/>
    <property type="project" value="GO_Central"/>
</dbReference>
<dbReference type="GO" id="GO:0005874">
    <property type="term" value="C:microtubule"/>
    <property type="evidence" value="ECO:0000318"/>
    <property type="project" value="GO_Central"/>
</dbReference>
<dbReference type="GO" id="GO:0005741">
    <property type="term" value="C:mitochondrial outer membrane"/>
    <property type="evidence" value="ECO:0000314"/>
    <property type="project" value="SGD"/>
</dbReference>
<dbReference type="GO" id="GO:0005739">
    <property type="term" value="C:mitochondrion"/>
    <property type="evidence" value="ECO:0000314"/>
    <property type="project" value="UniProtKB"/>
</dbReference>
<dbReference type="GO" id="GO:0005777">
    <property type="term" value="C:peroxisome"/>
    <property type="evidence" value="ECO:0000314"/>
    <property type="project" value="SGD"/>
</dbReference>
<dbReference type="GO" id="GO:0005525">
    <property type="term" value="F:GTP binding"/>
    <property type="evidence" value="ECO:0007669"/>
    <property type="project" value="UniProtKB-KW"/>
</dbReference>
<dbReference type="GO" id="GO:0003924">
    <property type="term" value="F:GTPase activity"/>
    <property type="evidence" value="ECO:0000314"/>
    <property type="project" value="ParkinsonsUK-UCL"/>
</dbReference>
<dbReference type="GO" id="GO:0042802">
    <property type="term" value="F:identical protein binding"/>
    <property type="evidence" value="ECO:0000314"/>
    <property type="project" value="SGD"/>
</dbReference>
<dbReference type="GO" id="GO:0008017">
    <property type="term" value="F:microtubule binding"/>
    <property type="evidence" value="ECO:0000318"/>
    <property type="project" value="GO_Central"/>
</dbReference>
<dbReference type="GO" id="GO:0006897">
    <property type="term" value="P:endocytosis"/>
    <property type="evidence" value="ECO:0000318"/>
    <property type="project" value="GO_Central"/>
</dbReference>
<dbReference type="GO" id="GO:0015886">
    <property type="term" value="P:heme transport"/>
    <property type="evidence" value="ECO:0000315"/>
    <property type="project" value="SGD"/>
</dbReference>
<dbReference type="GO" id="GO:0048312">
    <property type="term" value="P:intracellular distribution of mitochondria"/>
    <property type="evidence" value="ECO:0000316"/>
    <property type="project" value="SGD"/>
</dbReference>
<dbReference type="GO" id="GO:0016236">
    <property type="term" value="P:macroautophagy"/>
    <property type="evidence" value="ECO:0000315"/>
    <property type="project" value="SGD"/>
</dbReference>
<dbReference type="GO" id="GO:0097753">
    <property type="term" value="P:membrane bending"/>
    <property type="evidence" value="ECO:0000314"/>
    <property type="project" value="SGD"/>
</dbReference>
<dbReference type="GO" id="GO:0090148">
    <property type="term" value="P:membrane fission"/>
    <property type="evidence" value="ECO:0000315"/>
    <property type="project" value="SGD"/>
</dbReference>
<dbReference type="GO" id="GO:0061024">
    <property type="term" value="P:membrane organization"/>
    <property type="evidence" value="ECO:0000314"/>
    <property type="project" value="ParkinsonsUK-UCL"/>
</dbReference>
<dbReference type="GO" id="GO:0000266">
    <property type="term" value="P:mitochondrial fission"/>
    <property type="evidence" value="ECO:0000314"/>
    <property type="project" value="UniProtKB"/>
</dbReference>
<dbReference type="GO" id="GO:0000001">
    <property type="term" value="P:mitochondrion inheritance"/>
    <property type="evidence" value="ECO:0000316"/>
    <property type="project" value="SGD"/>
</dbReference>
<dbReference type="GO" id="GO:0007005">
    <property type="term" value="P:mitochondrion organization"/>
    <property type="evidence" value="ECO:0000315"/>
    <property type="project" value="SGD"/>
</dbReference>
<dbReference type="GO" id="GO:0016559">
    <property type="term" value="P:peroxisome fission"/>
    <property type="evidence" value="ECO:0000316"/>
    <property type="project" value="SGD"/>
</dbReference>
<dbReference type="GO" id="GO:0007031">
    <property type="term" value="P:peroxisome organization"/>
    <property type="evidence" value="ECO:0000315"/>
    <property type="project" value="SGD"/>
</dbReference>
<dbReference type="GO" id="GO:0051260">
    <property type="term" value="P:protein homooligomerization"/>
    <property type="evidence" value="ECO:0000314"/>
    <property type="project" value="ParkinsonsUK-UCL"/>
</dbReference>
<dbReference type="GO" id="GO:0016050">
    <property type="term" value="P:vesicle organization"/>
    <property type="evidence" value="ECO:0000314"/>
    <property type="project" value="ParkinsonsUK-UCL"/>
</dbReference>
<dbReference type="CDD" id="cd08771">
    <property type="entry name" value="DLP_1"/>
    <property type="match status" value="1"/>
</dbReference>
<dbReference type="FunFam" id="1.20.120.1240:FF:000002">
    <property type="entry name" value="Dynamin-1-like protein isoform 1"/>
    <property type="match status" value="1"/>
</dbReference>
<dbReference type="Gene3D" id="1.20.120.1240">
    <property type="entry name" value="Dynamin, middle domain"/>
    <property type="match status" value="1"/>
</dbReference>
<dbReference type="Gene3D" id="3.40.50.300">
    <property type="entry name" value="P-loop containing nucleotide triphosphate hydrolases"/>
    <property type="match status" value="1"/>
</dbReference>
<dbReference type="InterPro" id="IPR022812">
    <property type="entry name" value="Dynamin"/>
</dbReference>
<dbReference type="InterPro" id="IPR001401">
    <property type="entry name" value="Dynamin_GTPase"/>
</dbReference>
<dbReference type="InterPro" id="IPR019762">
    <property type="entry name" value="Dynamin_GTPase_CS"/>
</dbReference>
<dbReference type="InterPro" id="IPR045063">
    <property type="entry name" value="Dynamin_N"/>
</dbReference>
<dbReference type="InterPro" id="IPR000375">
    <property type="entry name" value="Dynamin_stalk"/>
</dbReference>
<dbReference type="InterPro" id="IPR030381">
    <property type="entry name" value="G_DYNAMIN_dom"/>
</dbReference>
<dbReference type="InterPro" id="IPR003130">
    <property type="entry name" value="GED"/>
</dbReference>
<dbReference type="InterPro" id="IPR020850">
    <property type="entry name" value="GED_dom"/>
</dbReference>
<dbReference type="InterPro" id="IPR027417">
    <property type="entry name" value="P-loop_NTPase"/>
</dbReference>
<dbReference type="PANTHER" id="PTHR11566">
    <property type="entry name" value="DYNAMIN"/>
    <property type="match status" value="1"/>
</dbReference>
<dbReference type="PANTHER" id="PTHR11566:SF235">
    <property type="entry name" value="DYNAMIN-RELATED PROTEIN DNM1"/>
    <property type="match status" value="1"/>
</dbReference>
<dbReference type="Pfam" id="PF01031">
    <property type="entry name" value="Dynamin_M"/>
    <property type="match status" value="1"/>
</dbReference>
<dbReference type="Pfam" id="PF00350">
    <property type="entry name" value="Dynamin_N"/>
    <property type="match status" value="1"/>
</dbReference>
<dbReference type="Pfam" id="PF02212">
    <property type="entry name" value="GED"/>
    <property type="match status" value="1"/>
</dbReference>
<dbReference type="PRINTS" id="PR00195">
    <property type="entry name" value="DYNAMIN"/>
</dbReference>
<dbReference type="SMART" id="SM00053">
    <property type="entry name" value="DYNc"/>
    <property type="match status" value="1"/>
</dbReference>
<dbReference type="SMART" id="SM00302">
    <property type="entry name" value="GED"/>
    <property type="match status" value="1"/>
</dbReference>
<dbReference type="SUPFAM" id="SSF52540">
    <property type="entry name" value="P-loop containing nucleoside triphosphate hydrolases"/>
    <property type="match status" value="1"/>
</dbReference>
<dbReference type="PROSITE" id="PS00410">
    <property type="entry name" value="G_DYNAMIN_1"/>
    <property type="match status" value="1"/>
</dbReference>
<dbReference type="PROSITE" id="PS51718">
    <property type="entry name" value="G_DYNAMIN_2"/>
    <property type="match status" value="1"/>
</dbReference>
<dbReference type="PROSITE" id="PS51388">
    <property type="entry name" value="GED"/>
    <property type="match status" value="1"/>
</dbReference>
<name>DNM1_YEAST</name>
<keyword id="KW-0342">GTP-binding</keyword>
<keyword id="KW-0378">Hydrolase</keyword>
<keyword id="KW-0472">Membrane</keyword>
<keyword id="KW-0496">Mitochondrion</keyword>
<keyword id="KW-1000">Mitochondrion outer membrane</keyword>
<keyword id="KW-0505">Motor protein</keyword>
<keyword id="KW-0547">Nucleotide-binding</keyword>
<keyword id="KW-0597">Phosphoprotein</keyword>
<keyword id="KW-1185">Reference proteome</keyword>
<organism>
    <name type="scientific">Saccharomyces cerevisiae (strain ATCC 204508 / S288c)</name>
    <name type="common">Baker's yeast</name>
    <dbReference type="NCBI Taxonomy" id="559292"/>
    <lineage>
        <taxon>Eukaryota</taxon>
        <taxon>Fungi</taxon>
        <taxon>Dikarya</taxon>
        <taxon>Ascomycota</taxon>
        <taxon>Saccharomycotina</taxon>
        <taxon>Saccharomycetes</taxon>
        <taxon>Saccharomycetales</taxon>
        <taxon>Saccharomycetaceae</taxon>
        <taxon>Saccharomyces</taxon>
    </lineage>
</organism>
<feature type="chain" id="PRO_0000206586" description="Dynamin-related protein DNM1">
    <location>
        <begin position="1"/>
        <end position="757"/>
    </location>
</feature>
<feature type="domain" description="Dynamin-type G" evidence="3">
    <location>
        <begin position="25"/>
        <end position="333"/>
    </location>
</feature>
<feature type="domain" description="GED" evidence="2">
    <location>
        <begin position="670"/>
        <end position="757"/>
    </location>
</feature>
<feature type="region of interest" description="G1 motif" evidence="3">
    <location>
        <begin position="35"/>
        <end position="42"/>
    </location>
</feature>
<feature type="region of interest" description="G2 motif" evidence="3">
    <location>
        <begin position="61"/>
        <end position="63"/>
    </location>
</feature>
<feature type="region of interest" description="G3 motif" evidence="3">
    <location>
        <begin position="175"/>
        <end position="178"/>
    </location>
</feature>
<feature type="region of interest" description="G4 motif" evidence="3">
    <location>
        <begin position="244"/>
        <end position="247"/>
    </location>
</feature>
<feature type="region of interest" description="G5 motif" evidence="3">
    <location>
        <begin position="274"/>
        <end position="277"/>
    </location>
</feature>
<feature type="region of interest" description="Disordered" evidence="4">
    <location>
        <begin position="557"/>
        <end position="597"/>
    </location>
</feature>
<feature type="compositionally biased region" description="Low complexity" evidence="4">
    <location>
        <begin position="567"/>
        <end position="580"/>
    </location>
</feature>
<feature type="binding site" evidence="1">
    <location>
        <begin position="35"/>
        <end position="42"/>
    </location>
    <ligand>
        <name>GTP</name>
        <dbReference type="ChEBI" id="CHEBI:37565"/>
    </ligand>
</feature>
<feature type="binding site" evidence="1">
    <location>
        <begin position="175"/>
        <end position="179"/>
    </location>
    <ligand>
        <name>GTP</name>
        <dbReference type="ChEBI" id="CHEBI:37565"/>
    </ligand>
</feature>
<feature type="binding site" evidence="1">
    <location>
        <begin position="244"/>
        <end position="247"/>
    </location>
    <ligand>
        <name>GTP</name>
        <dbReference type="ChEBI" id="CHEBI:37565"/>
    </ligand>
</feature>
<feature type="modified residue" description="Phosphoserine" evidence="13 14">
    <location>
        <position position="629"/>
    </location>
</feature>
<feature type="mutagenesis site" description="Induces an increase of mitochondrial fission." evidence="7">
    <original>K</original>
    <variation>A</variation>
    <location>
        <position position="705"/>
    </location>
</feature>
<feature type="sequence conflict" description="In Ref. 1; AAA99998." evidence="12" ref="1">
    <original>H</original>
    <variation>ISPD</variation>
    <location>
        <position position="124"/>
    </location>
</feature>